<comment type="function">
    <text evidence="1">Allows the formation of correctly charged Asn-tRNA(Asn) or Gln-tRNA(Gln) through the transamidation of misacylated Asp-tRNA(Asn) or Glu-tRNA(Gln) in organisms which lack either or both of asparaginyl-tRNA or glutaminyl-tRNA synthetases. The reaction takes place in the presence of glutamine and ATP through an activated phospho-Asp-tRNA(Asn) or phospho-Glu-tRNA(Gln).</text>
</comment>
<comment type="catalytic activity">
    <reaction evidence="1">
        <text>L-glutamyl-tRNA(Gln) + L-glutamine + ATP + H2O = L-glutaminyl-tRNA(Gln) + L-glutamate + ADP + phosphate + H(+)</text>
        <dbReference type="Rhea" id="RHEA:17521"/>
        <dbReference type="Rhea" id="RHEA-COMP:9681"/>
        <dbReference type="Rhea" id="RHEA-COMP:9684"/>
        <dbReference type="ChEBI" id="CHEBI:15377"/>
        <dbReference type="ChEBI" id="CHEBI:15378"/>
        <dbReference type="ChEBI" id="CHEBI:29985"/>
        <dbReference type="ChEBI" id="CHEBI:30616"/>
        <dbReference type="ChEBI" id="CHEBI:43474"/>
        <dbReference type="ChEBI" id="CHEBI:58359"/>
        <dbReference type="ChEBI" id="CHEBI:78520"/>
        <dbReference type="ChEBI" id="CHEBI:78521"/>
        <dbReference type="ChEBI" id="CHEBI:456216"/>
    </reaction>
</comment>
<comment type="catalytic activity">
    <reaction evidence="1">
        <text>L-aspartyl-tRNA(Asn) + L-glutamine + ATP + H2O = L-asparaginyl-tRNA(Asn) + L-glutamate + ADP + phosphate + 2 H(+)</text>
        <dbReference type="Rhea" id="RHEA:14513"/>
        <dbReference type="Rhea" id="RHEA-COMP:9674"/>
        <dbReference type="Rhea" id="RHEA-COMP:9677"/>
        <dbReference type="ChEBI" id="CHEBI:15377"/>
        <dbReference type="ChEBI" id="CHEBI:15378"/>
        <dbReference type="ChEBI" id="CHEBI:29985"/>
        <dbReference type="ChEBI" id="CHEBI:30616"/>
        <dbReference type="ChEBI" id="CHEBI:43474"/>
        <dbReference type="ChEBI" id="CHEBI:58359"/>
        <dbReference type="ChEBI" id="CHEBI:78515"/>
        <dbReference type="ChEBI" id="CHEBI:78516"/>
        <dbReference type="ChEBI" id="CHEBI:456216"/>
    </reaction>
</comment>
<comment type="subunit">
    <text evidence="1">Heterotrimer of A, B and C subunits.</text>
</comment>
<comment type="similarity">
    <text evidence="1">Belongs to the GatC family.</text>
</comment>
<sequence>MALNAQDIARIANLARLELSSTESERMLGQLNDFFGIVEKMQAVDTSGVSPLSHPVAAIQDIALRLREDIASEPDQRDANQRSAPAVERGLFLVPKVIE</sequence>
<keyword id="KW-0067">ATP-binding</keyword>
<keyword id="KW-0436">Ligase</keyword>
<keyword id="KW-0547">Nucleotide-binding</keyword>
<keyword id="KW-0648">Protein biosynthesis</keyword>
<keyword id="KW-1185">Reference proteome</keyword>
<evidence type="ECO:0000255" key="1">
    <source>
        <dbReference type="HAMAP-Rule" id="MF_00122"/>
    </source>
</evidence>
<dbReference type="EC" id="6.3.5.-" evidence="1"/>
<dbReference type="EMBL" id="CP000884">
    <property type="protein sequence ID" value="ABX32999.1"/>
    <property type="molecule type" value="Genomic_DNA"/>
</dbReference>
<dbReference type="RefSeq" id="WP_012202292.1">
    <property type="nucleotide sequence ID" value="NC_010002.1"/>
</dbReference>
<dbReference type="SMR" id="A9BPN0"/>
<dbReference type="STRING" id="398578.Daci_0353"/>
<dbReference type="GeneID" id="24117535"/>
<dbReference type="KEGG" id="dac:Daci_0353"/>
<dbReference type="eggNOG" id="COG0721">
    <property type="taxonomic scope" value="Bacteria"/>
</dbReference>
<dbReference type="HOGENOM" id="CLU_105899_2_2_4"/>
<dbReference type="Proteomes" id="UP000000784">
    <property type="component" value="Chromosome"/>
</dbReference>
<dbReference type="GO" id="GO:0050566">
    <property type="term" value="F:asparaginyl-tRNA synthase (glutamine-hydrolyzing) activity"/>
    <property type="evidence" value="ECO:0007669"/>
    <property type="project" value="RHEA"/>
</dbReference>
<dbReference type="GO" id="GO:0005524">
    <property type="term" value="F:ATP binding"/>
    <property type="evidence" value="ECO:0007669"/>
    <property type="project" value="UniProtKB-KW"/>
</dbReference>
<dbReference type="GO" id="GO:0050567">
    <property type="term" value="F:glutaminyl-tRNA synthase (glutamine-hydrolyzing) activity"/>
    <property type="evidence" value="ECO:0007669"/>
    <property type="project" value="UniProtKB-UniRule"/>
</dbReference>
<dbReference type="GO" id="GO:0070681">
    <property type="term" value="P:glutaminyl-tRNAGln biosynthesis via transamidation"/>
    <property type="evidence" value="ECO:0007669"/>
    <property type="project" value="TreeGrafter"/>
</dbReference>
<dbReference type="GO" id="GO:0006450">
    <property type="term" value="P:regulation of translational fidelity"/>
    <property type="evidence" value="ECO:0007669"/>
    <property type="project" value="InterPro"/>
</dbReference>
<dbReference type="GO" id="GO:0006412">
    <property type="term" value="P:translation"/>
    <property type="evidence" value="ECO:0007669"/>
    <property type="project" value="UniProtKB-UniRule"/>
</dbReference>
<dbReference type="Gene3D" id="1.10.20.60">
    <property type="entry name" value="Glu-tRNAGln amidotransferase C subunit, N-terminal domain"/>
    <property type="match status" value="1"/>
</dbReference>
<dbReference type="HAMAP" id="MF_00122">
    <property type="entry name" value="GatC"/>
    <property type="match status" value="1"/>
</dbReference>
<dbReference type="InterPro" id="IPR036113">
    <property type="entry name" value="Asp/Glu-ADT_sf_sub_c"/>
</dbReference>
<dbReference type="InterPro" id="IPR003837">
    <property type="entry name" value="GatC"/>
</dbReference>
<dbReference type="NCBIfam" id="TIGR00135">
    <property type="entry name" value="gatC"/>
    <property type="match status" value="1"/>
</dbReference>
<dbReference type="PANTHER" id="PTHR15004">
    <property type="entry name" value="GLUTAMYL-TRNA(GLN) AMIDOTRANSFERASE SUBUNIT C, MITOCHONDRIAL"/>
    <property type="match status" value="1"/>
</dbReference>
<dbReference type="PANTHER" id="PTHR15004:SF0">
    <property type="entry name" value="GLUTAMYL-TRNA(GLN) AMIDOTRANSFERASE SUBUNIT C, MITOCHONDRIAL"/>
    <property type="match status" value="1"/>
</dbReference>
<dbReference type="Pfam" id="PF02686">
    <property type="entry name" value="GatC"/>
    <property type="match status" value="1"/>
</dbReference>
<dbReference type="SUPFAM" id="SSF141000">
    <property type="entry name" value="Glu-tRNAGln amidotransferase C subunit"/>
    <property type="match status" value="1"/>
</dbReference>
<reference key="1">
    <citation type="submission" date="2007-11" db="EMBL/GenBank/DDBJ databases">
        <title>Complete sequence of Delftia acidovorans DSM 14801 / SPH-1.</title>
        <authorList>
            <person name="Copeland A."/>
            <person name="Lucas S."/>
            <person name="Lapidus A."/>
            <person name="Barry K."/>
            <person name="Glavina del Rio T."/>
            <person name="Dalin E."/>
            <person name="Tice H."/>
            <person name="Pitluck S."/>
            <person name="Lowry S."/>
            <person name="Clum A."/>
            <person name="Schmutz J."/>
            <person name="Larimer F."/>
            <person name="Land M."/>
            <person name="Hauser L."/>
            <person name="Kyrpides N."/>
            <person name="Kim E."/>
            <person name="Schleheck D."/>
            <person name="Richardson P."/>
        </authorList>
    </citation>
    <scope>NUCLEOTIDE SEQUENCE [LARGE SCALE GENOMIC DNA]</scope>
    <source>
        <strain>DSM 14801 / SPH-1</strain>
    </source>
</reference>
<gene>
    <name evidence="1" type="primary">gatC</name>
    <name type="ordered locus">Daci_0353</name>
</gene>
<organism>
    <name type="scientific">Delftia acidovorans (strain DSM 14801 / SPH-1)</name>
    <dbReference type="NCBI Taxonomy" id="398578"/>
    <lineage>
        <taxon>Bacteria</taxon>
        <taxon>Pseudomonadati</taxon>
        <taxon>Pseudomonadota</taxon>
        <taxon>Betaproteobacteria</taxon>
        <taxon>Burkholderiales</taxon>
        <taxon>Comamonadaceae</taxon>
        <taxon>Delftia</taxon>
    </lineage>
</organism>
<proteinExistence type="inferred from homology"/>
<accession>A9BPN0</accession>
<name>GATC_DELAS</name>
<protein>
    <recommendedName>
        <fullName evidence="1">Aspartyl/glutamyl-tRNA(Asn/Gln) amidotransferase subunit C</fullName>
        <shortName evidence="1">Asp/Glu-ADT subunit C</shortName>
        <ecNumber evidence="1">6.3.5.-</ecNumber>
    </recommendedName>
</protein>
<feature type="chain" id="PRO_1000095281" description="Aspartyl/glutamyl-tRNA(Asn/Gln) amidotransferase subunit C">
    <location>
        <begin position="1"/>
        <end position="99"/>
    </location>
</feature>